<name>PGM2L_PONAB</name>
<gene>
    <name type="primary">PGM2L1</name>
</gene>
<evidence type="ECO:0000250" key="1">
    <source>
        <dbReference type="UniProtKB" id="P00949"/>
    </source>
</evidence>
<evidence type="ECO:0000250" key="2">
    <source>
        <dbReference type="UniProtKB" id="Q6PCE3"/>
    </source>
</evidence>
<evidence type="ECO:0000305" key="3"/>
<proteinExistence type="evidence at transcript level"/>
<accession>Q5R979</accession>
<accession>Q5RAD8</accession>
<sequence length="622" mass="70456">MAENTEGDLNSNLLHAPYHTGDPQLDTAIGQWLRWDKNPKTKEQIENLLRNGMNKELRDRLCCRMTFGTAGLRSAMGAGFCYINDLTVIQSTQGMYKYLERCFSDFKQRGFVVGYDTRGQVTSSCSSQRLAKLTAAVLLAKDVPVYLFSRYVPTPFVPYAVQKLKAVAGVMITASHNRKEDNGYKVYWETGAQITSPHDKEILKCIEECVEPWNGSWNDNLVDTSPLKRDPLQDICRRYMEDLKKICFYRELNSKTTLKFVHTSFHGVGHDYVQLAFKVFGFKPPIPVPEQKDPDPDFSTVKCPNPEEGESVLELSLRLAEKENARVVLATDPDADRLAAAELQENGCWKVFTGNELAALFGWWMFDCWKKNKSRNADVKNVYMLATTVSSKILKAIALKEGFHFEETLPGFKWIGSRIIDLLENGKEVLFAFEESIGFLCGTSVLDKDGVSAAVVVAEMASYLETMNITLKQQLVKVYEKYGYHISKTSYFLCYEPPTIKSIFERLRNFDSPKEYPKFCGTFAILHVRDITTGYDSSQPNKKSVLPVSKNSQMITFTFQNGCVATLRTSGTEPKIKYYAEMCASPDQSDTALLEEELKKLIDALIENFLQPSKNGLIWRSV</sequence>
<organism>
    <name type="scientific">Pongo abelii</name>
    <name type="common">Sumatran orangutan</name>
    <name type="synonym">Pongo pygmaeus abelii</name>
    <dbReference type="NCBI Taxonomy" id="9601"/>
    <lineage>
        <taxon>Eukaryota</taxon>
        <taxon>Metazoa</taxon>
        <taxon>Chordata</taxon>
        <taxon>Craniata</taxon>
        <taxon>Vertebrata</taxon>
        <taxon>Euteleostomi</taxon>
        <taxon>Mammalia</taxon>
        <taxon>Eutheria</taxon>
        <taxon>Euarchontoglires</taxon>
        <taxon>Primates</taxon>
        <taxon>Haplorrhini</taxon>
        <taxon>Catarrhini</taxon>
        <taxon>Hominidae</taxon>
        <taxon>Pongo</taxon>
    </lineage>
</organism>
<keyword id="KW-0119">Carbohydrate metabolism</keyword>
<keyword id="KW-0963">Cytoplasm</keyword>
<keyword id="KW-0313">Glucose metabolism</keyword>
<keyword id="KW-0413">Isomerase</keyword>
<keyword id="KW-0460">Magnesium</keyword>
<keyword id="KW-0479">Metal-binding</keyword>
<keyword id="KW-0597">Phosphoprotein</keyword>
<keyword id="KW-1185">Reference proteome</keyword>
<keyword id="KW-0808">Transferase</keyword>
<feature type="chain" id="PRO_0000147786" description="Glucose 1,6-bisphosphate synthase">
    <location>
        <begin position="1"/>
        <end position="622"/>
    </location>
</feature>
<feature type="active site" description="Phosphoserine intermediate" evidence="1">
    <location>
        <position position="175"/>
    </location>
</feature>
<feature type="binding site" evidence="1">
    <location>
        <position position="73"/>
    </location>
    <ligand>
        <name>alpha-D-glucose 1,6-bisphosphate</name>
        <dbReference type="ChEBI" id="CHEBI:58392"/>
    </ligand>
</feature>
<feature type="binding site" evidence="1">
    <location>
        <position position="175"/>
    </location>
    <ligand>
        <name>alpha-D-glucose 1,6-bisphosphate</name>
        <dbReference type="ChEBI" id="CHEBI:58392"/>
    </ligand>
</feature>
<feature type="binding site" description="via phosphate group" evidence="1">
    <location>
        <position position="175"/>
    </location>
    <ligand>
        <name>Mg(2+)</name>
        <dbReference type="ChEBI" id="CHEBI:18420"/>
    </ligand>
</feature>
<feature type="binding site" evidence="1">
    <location>
        <position position="332"/>
    </location>
    <ligand>
        <name>Mg(2+)</name>
        <dbReference type="ChEBI" id="CHEBI:18420"/>
    </ligand>
</feature>
<feature type="binding site" evidence="1">
    <location>
        <position position="334"/>
    </location>
    <ligand>
        <name>Mg(2+)</name>
        <dbReference type="ChEBI" id="CHEBI:18420"/>
    </ligand>
</feature>
<feature type="binding site" evidence="1">
    <location>
        <position position="336"/>
    </location>
    <ligand>
        <name>alpha-D-glucose 1,6-bisphosphate</name>
        <dbReference type="ChEBI" id="CHEBI:58392"/>
    </ligand>
</feature>
<feature type="binding site" evidence="1">
    <location>
        <position position="336"/>
    </location>
    <ligand>
        <name>Mg(2+)</name>
        <dbReference type="ChEBI" id="CHEBI:18420"/>
    </ligand>
</feature>
<feature type="binding site" evidence="1">
    <location>
        <position position="337"/>
    </location>
    <ligand>
        <name>alpha-D-glucose 1,6-bisphosphate</name>
        <dbReference type="ChEBI" id="CHEBI:58392"/>
    </ligand>
</feature>
<feature type="binding site" evidence="1">
    <location>
        <position position="434"/>
    </location>
    <ligand>
        <name>alpha-D-glucose 1,6-bisphosphate</name>
        <dbReference type="ChEBI" id="CHEBI:58392"/>
    </ligand>
</feature>
<feature type="binding site" evidence="1">
    <location>
        <position position="436"/>
    </location>
    <ligand>
        <name>alpha-D-glucose 1,6-bisphosphate</name>
        <dbReference type="ChEBI" id="CHEBI:58392"/>
    </ligand>
</feature>
<feature type="binding site" evidence="1">
    <location>
        <position position="448"/>
    </location>
    <ligand>
        <name>alpha-D-glucose 1,6-bisphosphate</name>
        <dbReference type="ChEBI" id="CHEBI:58392"/>
    </ligand>
</feature>
<feature type="modified residue" description="Phosphoserine" evidence="2">
    <location>
        <position position="175"/>
    </location>
</feature>
<feature type="sequence conflict" description="In Ref. 1; CAH91272." evidence="3" ref="1">
    <original>L</original>
    <variation>P</variation>
    <location>
        <position position="598"/>
    </location>
</feature>
<dbReference type="EC" id="2.7.1.106" evidence="2"/>
<dbReference type="EMBL" id="CR859079">
    <property type="protein sequence ID" value="CAH91272.1"/>
    <property type="molecule type" value="mRNA"/>
</dbReference>
<dbReference type="EMBL" id="CR859513">
    <property type="protein sequence ID" value="CAH91681.1"/>
    <property type="molecule type" value="mRNA"/>
</dbReference>
<dbReference type="RefSeq" id="NP_001125984.1">
    <property type="nucleotide sequence ID" value="NM_001132512.1"/>
</dbReference>
<dbReference type="SMR" id="Q5R979"/>
<dbReference type="FunCoup" id="Q5R979">
    <property type="interactions" value="745"/>
</dbReference>
<dbReference type="STRING" id="9601.ENSPPYP00000004199"/>
<dbReference type="Ensembl" id="ENSPPYT00000004370.2">
    <property type="protein sequence ID" value="ENSPPYP00000004199.1"/>
    <property type="gene ID" value="ENSPPYG00000003674.2"/>
</dbReference>
<dbReference type="GeneID" id="100172923"/>
<dbReference type="KEGG" id="pon:100172923"/>
<dbReference type="CTD" id="283209"/>
<dbReference type="eggNOG" id="KOG1220">
    <property type="taxonomic scope" value="Eukaryota"/>
</dbReference>
<dbReference type="GeneTree" id="ENSGT00940000158353"/>
<dbReference type="HOGENOM" id="CLU_016950_0_1_1"/>
<dbReference type="InParanoid" id="Q5R979"/>
<dbReference type="OMA" id="RYKSKEF"/>
<dbReference type="OrthoDB" id="8300170at2759"/>
<dbReference type="TreeFam" id="TF300692"/>
<dbReference type="Proteomes" id="UP000001595">
    <property type="component" value="Chromosome 11"/>
</dbReference>
<dbReference type="GO" id="GO:0005829">
    <property type="term" value="C:cytosol"/>
    <property type="evidence" value="ECO:0007669"/>
    <property type="project" value="UniProtKB-SubCell"/>
</dbReference>
<dbReference type="GO" id="GO:0005634">
    <property type="term" value="C:nucleus"/>
    <property type="evidence" value="ECO:0007669"/>
    <property type="project" value="TreeGrafter"/>
</dbReference>
<dbReference type="GO" id="GO:0047933">
    <property type="term" value="F:glucose-1,6-bisphosphate synthase activity"/>
    <property type="evidence" value="ECO:0000250"/>
    <property type="project" value="UniProtKB"/>
</dbReference>
<dbReference type="GO" id="GO:0016868">
    <property type="term" value="F:intramolecular phosphotransferase activity"/>
    <property type="evidence" value="ECO:0007669"/>
    <property type="project" value="InterPro"/>
</dbReference>
<dbReference type="GO" id="GO:0046872">
    <property type="term" value="F:metal ion binding"/>
    <property type="evidence" value="ECO:0007669"/>
    <property type="project" value="UniProtKB-KW"/>
</dbReference>
<dbReference type="GO" id="GO:0006006">
    <property type="term" value="P:glucose metabolic process"/>
    <property type="evidence" value="ECO:0007669"/>
    <property type="project" value="UniProtKB-KW"/>
</dbReference>
<dbReference type="CDD" id="cd05799">
    <property type="entry name" value="PGM2"/>
    <property type="match status" value="1"/>
</dbReference>
<dbReference type="FunFam" id="3.40.120.10:FF:000016">
    <property type="entry name" value="Glucose 1,6-bisphosphate synthase"/>
    <property type="match status" value="1"/>
</dbReference>
<dbReference type="FunFam" id="3.40.120.10:FF:000018">
    <property type="entry name" value="Glucose 1,6-bisphosphate synthase"/>
    <property type="match status" value="1"/>
</dbReference>
<dbReference type="FunFam" id="3.40.120.10:FF:000017">
    <property type="entry name" value="glucose 1,6-bisphosphate synthase"/>
    <property type="match status" value="1"/>
</dbReference>
<dbReference type="Gene3D" id="3.40.120.10">
    <property type="entry name" value="Alpha-D-Glucose-1,6-Bisphosphate, subunit A, domain 3"/>
    <property type="match status" value="3"/>
</dbReference>
<dbReference type="InterPro" id="IPR005844">
    <property type="entry name" value="A-D-PHexomutase_a/b/a-I"/>
</dbReference>
<dbReference type="InterPro" id="IPR016055">
    <property type="entry name" value="A-D-PHexomutase_a/b/a-I/II/III"/>
</dbReference>
<dbReference type="InterPro" id="IPR005845">
    <property type="entry name" value="A-D-PHexomutase_a/b/a-II"/>
</dbReference>
<dbReference type="InterPro" id="IPR005846">
    <property type="entry name" value="A-D-PHexomutase_a/b/a-III"/>
</dbReference>
<dbReference type="InterPro" id="IPR036900">
    <property type="entry name" value="A-D-PHexomutase_C_sf"/>
</dbReference>
<dbReference type="PANTHER" id="PTHR45745:SF2">
    <property type="entry name" value="GLUCOSE 1,6-BISPHOSPHATE SYNTHASE"/>
    <property type="match status" value="1"/>
</dbReference>
<dbReference type="PANTHER" id="PTHR45745">
    <property type="entry name" value="PHOSPHOMANNOMUTASE 45A"/>
    <property type="match status" value="1"/>
</dbReference>
<dbReference type="Pfam" id="PF02878">
    <property type="entry name" value="PGM_PMM_I"/>
    <property type="match status" value="1"/>
</dbReference>
<dbReference type="Pfam" id="PF02879">
    <property type="entry name" value="PGM_PMM_II"/>
    <property type="match status" value="1"/>
</dbReference>
<dbReference type="Pfam" id="PF02880">
    <property type="entry name" value="PGM_PMM_III"/>
    <property type="match status" value="1"/>
</dbReference>
<dbReference type="SUPFAM" id="SSF55957">
    <property type="entry name" value="Phosphoglucomutase, C-terminal domain"/>
    <property type="match status" value="1"/>
</dbReference>
<dbReference type="SUPFAM" id="SSF53738">
    <property type="entry name" value="Phosphoglucomutase, first 3 domains"/>
    <property type="match status" value="3"/>
</dbReference>
<protein>
    <recommendedName>
        <fullName evidence="3">Glucose 1,6-bisphosphate synthase</fullName>
        <ecNumber evidence="2">2.7.1.106</ecNumber>
    </recommendedName>
    <alternativeName>
        <fullName>Phosphoglucomutase-2-like 1</fullName>
    </alternativeName>
</protein>
<reference key="1">
    <citation type="submission" date="2004-11" db="EMBL/GenBank/DDBJ databases">
        <authorList>
            <consortium name="The German cDNA consortium"/>
        </authorList>
    </citation>
    <scope>NUCLEOTIDE SEQUENCE [LARGE SCALE MRNA]</scope>
    <source>
        <tissue>Brain cortex</tissue>
    </source>
</reference>
<comment type="function">
    <text evidence="2">Glucose 1,6-bisphosphate synthase using 1,3-bisphosphoglycerate as a phosphate donor and a series of 1-phosphate sugars, including glucose 1-phosphate, mannose 1-phosphate, ribose 1-phosphate and deoxyribose 1-phosphate, as acceptors. In vitro, also exhibits very low phosphopentomutase and phosphoglucomutase activity which are most probably not physiologically relevant.</text>
</comment>
<comment type="catalytic activity">
    <reaction evidence="2">
        <text>(2R)-3-phospho-glyceroyl phosphate + alpha-D-glucose 1-phosphate = alpha-D-glucose 1,6-bisphosphate + (2R)-3-phosphoglycerate + H(+)</text>
        <dbReference type="Rhea" id="RHEA:16769"/>
        <dbReference type="ChEBI" id="CHEBI:15378"/>
        <dbReference type="ChEBI" id="CHEBI:57604"/>
        <dbReference type="ChEBI" id="CHEBI:58272"/>
        <dbReference type="ChEBI" id="CHEBI:58392"/>
        <dbReference type="ChEBI" id="CHEBI:58601"/>
        <dbReference type="EC" id="2.7.1.106"/>
    </reaction>
    <physiologicalReaction direction="left-to-right" evidence="2">
        <dbReference type="Rhea" id="RHEA:16770"/>
    </physiologicalReaction>
</comment>
<comment type="catalytic activity">
    <reaction evidence="2">
        <text>alpha-D-glucose 6-phosphate + (2R)-3-phospho-glyceroyl phosphate = alpha-D-glucose 1,6-bisphosphate + (2R)-3-phosphoglycerate + H(+)</text>
        <dbReference type="Rhea" id="RHEA:70911"/>
        <dbReference type="ChEBI" id="CHEBI:15378"/>
        <dbReference type="ChEBI" id="CHEBI:57604"/>
        <dbReference type="ChEBI" id="CHEBI:58225"/>
        <dbReference type="ChEBI" id="CHEBI:58272"/>
        <dbReference type="ChEBI" id="CHEBI:58392"/>
    </reaction>
    <physiologicalReaction direction="left-to-right" evidence="2">
        <dbReference type="Rhea" id="RHEA:70912"/>
    </physiologicalReaction>
</comment>
<comment type="catalytic activity">
    <reaction evidence="2">
        <text>(2R)-3-phospho-glyceroyl phosphate + alpha-D-ribose 1-phosphate = alpha-D-ribose 1,5-bisphosphate + (2R)-3-phosphoglycerate + H(+)</text>
        <dbReference type="Rhea" id="RHEA:70899"/>
        <dbReference type="ChEBI" id="CHEBI:15378"/>
        <dbReference type="ChEBI" id="CHEBI:57604"/>
        <dbReference type="ChEBI" id="CHEBI:57720"/>
        <dbReference type="ChEBI" id="CHEBI:58272"/>
        <dbReference type="ChEBI" id="CHEBI:68688"/>
    </reaction>
    <physiologicalReaction direction="left-to-right" evidence="2">
        <dbReference type="Rhea" id="RHEA:70900"/>
    </physiologicalReaction>
</comment>
<comment type="catalytic activity">
    <reaction evidence="2">
        <text>2-deoxy-alpha-D-ribose 1-phosphate + (2R)-3-phospho-glyceroyl phosphate = 2-deoxy-alpha-D-ribose 1,5-bisphosphate + (2R)-3-phosphoglycerate + H(+)</text>
        <dbReference type="Rhea" id="RHEA:70903"/>
        <dbReference type="ChEBI" id="CHEBI:15378"/>
        <dbReference type="ChEBI" id="CHEBI:57259"/>
        <dbReference type="ChEBI" id="CHEBI:57604"/>
        <dbReference type="ChEBI" id="CHEBI:58272"/>
        <dbReference type="ChEBI" id="CHEBI:190126"/>
    </reaction>
    <physiologicalReaction direction="left-to-right" evidence="2">
        <dbReference type="Rhea" id="RHEA:70904"/>
    </physiologicalReaction>
</comment>
<comment type="catalytic activity">
    <reaction evidence="2">
        <text>(2R)-3-phospho-glyceroyl phosphate + alpha-D-mannose 1-phosphate = alpha-D-mannose 1,6-bisphosphate + (2R)-3-phosphoglycerate + H(+)</text>
        <dbReference type="Rhea" id="RHEA:70907"/>
        <dbReference type="ChEBI" id="CHEBI:15378"/>
        <dbReference type="ChEBI" id="CHEBI:57604"/>
        <dbReference type="ChEBI" id="CHEBI:58272"/>
        <dbReference type="ChEBI" id="CHEBI:58409"/>
        <dbReference type="ChEBI" id="CHEBI:190127"/>
    </reaction>
    <physiologicalReaction direction="left-to-right" evidence="2">
        <dbReference type="Rhea" id="RHEA:70908"/>
    </physiologicalReaction>
</comment>
<comment type="subcellular location">
    <subcellularLocation>
        <location evidence="2">Cytoplasm</location>
        <location evidence="2">Cytosol</location>
    </subcellularLocation>
</comment>
<comment type="similarity">
    <text evidence="3">Belongs to the phosphohexose mutase family.</text>
</comment>